<accession>Q49YS9</accession>
<reference key="1">
    <citation type="journal article" date="2005" name="Proc. Natl. Acad. Sci. U.S.A.">
        <title>Whole genome sequence of Staphylococcus saprophyticus reveals the pathogenesis of uncomplicated urinary tract infection.</title>
        <authorList>
            <person name="Kuroda M."/>
            <person name="Yamashita A."/>
            <person name="Hirakawa H."/>
            <person name="Kumano M."/>
            <person name="Morikawa K."/>
            <person name="Higashide M."/>
            <person name="Maruyama A."/>
            <person name="Inose Y."/>
            <person name="Matoba K."/>
            <person name="Toh H."/>
            <person name="Kuhara S."/>
            <person name="Hattori M."/>
            <person name="Ohta T."/>
        </authorList>
    </citation>
    <scope>NUCLEOTIDE SEQUENCE [LARGE SCALE GENOMIC DNA]</scope>
    <source>
        <strain>ATCC 15305 / DSM 20229 / NCIMB 8711 / NCTC 7292 / S-41</strain>
    </source>
</reference>
<keyword id="KW-0010">Activator</keyword>
<keyword id="KW-0963">Cytoplasm</keyword>
<keyword id="KW-0238">DNA-binding</keyword>
<keyword id="KW-0597">Phosphoprotein</keyword>
<keyword id="KW-1185">Reference proteome</keyword>
<keyword id="KW-0804">Transcription</keyword>
<keyword id="KW-0805">Transcription regulation</keyword>
<keyword id="KW-0902">Two-component regulatory system</keyword>
<comment type="function">
    <text evidence="1">Member of the two-component regulatory system VraS/VraR involved in the control of the cell wall peptidoglycan biosynthesis.</text>
</comment>
<comment type="subcellular location">
    <subcellularLocation>
        <location evidence="4">Cytoplasm</location>
    </subcellularLocation>
</comment>
<comment type="PTM">
    <text evidence="4">Phosphorylated by VraS.</text>
</comment>
<sequence>MPIKVLFVDDHEMVRIGISSYLSTQSDIDVVGEGKSGKDAIEKAHELKPDLILMDLLMDDMDGVEATEQVKKDLPNIKVVMLTSYIEDNEVYRALDSGVDSYILKTTSASDIAEAIRKTYNNESVFEAEVLVKMRNRMKQRAELYEMLTEREMEILLLIAKGYSNQEIASASHITIKTVKTHVSNILSKLEVQDRTQAVIYAFQHNLIQ</sequence>
<proteinExistence type="inferred from homology"/>
<protein>
    <recommendedName>
        <fullName>Response regulator protein VraR</fullName>
    </recommendedName>
</protein>
<feature type="chain" id="PRO_0000081278" description="Response regulator protein VraR">
    <location>
        <begin position="1"/>
        <end position="209"/>
    </location>
</feature>
<feature type="domain" description="Response regulatory" evidence="2">
    <location>
        <begin position="4"/>
        <end position="120"/>
    </location>
</feature>
<feature type="domain" description="HTH luxR-type" evidence="3">
    <location>
        <begin position="141"/>
        <end position="206"/>
    </location>
</feature>
<feature type="DNA-binding region" description="H-T-H motif" evidence="3">
    <location>
        <begin position="165"/>
        <end position="184"/>
    </location>
</feature>
<feature type="modified residue" description="4-aspartylphosphate" evidence="2">
    <location>
        <position position="55"/>
    </location>
</feature>
<dbReference type="EMBL" id="AP008934">
    <property type="protein sequence ID" value="BAE18054.1"/>
    <property type="molecule type" value="Genomic_DNA"/>
</dbReference>
<dbReference type="RefSeq" id="WP_002482846.1">
    <property type="nucleotide sequence ID" value="NZ_MTGA01000031.1"/>
</dbReference>
<dbReference type="SMR" id="Q49YS9"/>
<dbReference type="KEGG" id="ssp:SSP0909"/>
<dbReference type="eggNOG" id="COG2197">
    <property type="taxonomic scope" value="Bacteria"/>
</dbReference>
<dbReference type="HOGENOM" id="CLU_000445_90_10_9"/>
<dbReference type="OrthoDB" id="9780153at2"/>
<dbReference type="Proteomes" id="UP000006371">
    <property type="component" value="Chromosome"/>
</dbReference>
<dbReference type="GO" id="GO:0005737">
    <property type="term" value="C:cytoplasm"/>
    <property type="evidence" value="ECO:0007669"/>
    <property type="project" value="UniProtKB-SubCell"/>
</dbReference>
<dbReference type="GO" id="GO:0003677">
    <property type="term" value="F:DNA binding"/>
    <property type="evidence" value="ECO:0007669"/>
    <property type="project" value="UniProtKB-KW"/>
</dbReference>
<dbReference type="GO" id="GO:0000160">
    <property type="term" value="P:phosphorelay signal transduction system"/>
    <property type="evidence" value="ECO:0007669"/>
    <property type="project" value="UniProtKB-KW"/>
</dbReference>
<dbReference type="GO" id="GO:0006355">
    <property type="term" value="P:regulation of DNA-templated transcription"/>
    <property type="evidence" value="ECO:0007669"/>
    <property type="project" value="InterPro"/>
</dbReference>
<dbReference type="CDD" id="cd06170">
    <property type="entry name" value="LuxR_C_like"/>
    <property type="match status" value="1"/>
</dbReference>
<dbReference type="CDD" id="cd17535">
    <property type="entry name" value="REC_NarL-like"/>
    <property type="match status" value="1"/>
</dbReference>
<dbReference type="Gene3D" id="3.40.50.2300">
    <property type="match status" value="1"/>
</dbReference>
<dbReference type="InterPro" id="IPR011006">
    <property type="entry name" value="CheY-like_superfamily"/>
</dbReference>
<dbReference type="InterPro" id="IPR016032">
    <property type="entry name" value="Sig_transdc_resp-reg_C-effctor"/>
</dbReference>
<dbReference type="InterPro" id="IPR001789">
    <property type="entry name" value="Sig_transdc_resp-reg_receiver"/>
</dbReference>
<dbReference type="InterPro" id="IPR000792">
    <property type="entry name" value="Tscrpt_reg_LuxR_C"/>
</dbReference>
<dbReference type="InterPro" id="IPR039420">
    <property type="entry name" value="WalR-like"/>
</dbReference>
<dbReference type="PANTHER" id="PTHR43214:SF37">
    <property type="entry name" value="TRANSCRIPTIONAL REGULATORY PROTEIN YDFI"/>
    <property type="match status" value="1"/>
</dbReference>
<dbReference type="PANTHER" id="PTHR43214">
    <property type="entry name" value="TWO-COMPONENT RESPONSE REGULATOR"/>
    <property type="match status" value="1"/>
</dbReference>
<dbReference type="Pfam" id="PF00196">
    <property type="entry name" value="GerE"/>
    <property type="match status" value="1"/>
</dbReference>
<dbReference type="Pfam" id="PF00072">
    <property type="entry name" value="Response_reg"/>
    <property type="match status" value="1"/>
</dbReference>
<dbReference type="PRINTS" id="PR00038">
    <property type="entry name" value="HTHLUXR"/>
</dbReference>
<dbReference type="SMART" id="SM00421">
    <property type="entry name" value="HTH_LUXR"/>
    <property type="match status" value="1"/>
</dbReference>
<dbReference type="SMART" id="SM00448">
    <property type="entry name" value="REC"/>
    <property type="match status" value="1"/>
</dbReference>
<dbReference type="SUPFAM" id="SSF46894">
    <property type="entry name" value="C-terminal effector domain of the bipartite response regulators"/>
    <property type="match status" value="1"/>
</dbReference>
<dbReference type="SUPFAM" id="SSF52172">
    <property type="entry name" value="CheY-like"/>
    <property type="match status" value="1"/>
</dbReference>
<dbReference type="PROSITE" id="PS50043">
    <property type="entry name" value="HTH_LUXR_2"/>
    <property type="match status" value="1"/>
</dbReference>
<dbReference type="PROSITE" id="PS50110">
    <property type="entry name" value="RESPONSE_REGULATORY"/>
    <property type="match status" value="1"/>
</dbReference>
<gene>
    <name type="primary">vraR</name>
    <name type="ordered locus">SSP0909</name>
</gene>
<evidence type="ECO:0000250" key="1"/>
<evidence type="ECO:0000255" key="2">
    <source>
        <dbReference type="PROSITE-ProRule" id="PRU00169"/>
    </source>
</evidence>
<evidence type="ECO:0000255" key="3">
    <source>
        <dbReference type="PROSITE-ProRule" id="PRU00411"/>
    </source>
</evidence>
<evidence type="ECO:0000305" key="4"/>
<name>VRAR_STAS1</name>
<organism>
    <name type="scientific">Staphylococcus saprophyticus subsp. saprophyticus (strain ATCC 15305 / DSM 20229 / NCIMB 8711 / NCTC 7292 / S-41)</name>
    <dbReference type="NCBI Taxonomy" id="342451"/>
    <lineage>
        <taxon>Bacteria</taxon>
        <taxon>Bacillati</taxon>
        <taxon>Bacillota</taxon>
        <taxon>Bacilli</taxon>
        <taxon>Bacillales</taxon>
        <taxon>Staphylococcaceae</taxon>
        <taxon>Staphylococcus</taxon>
    </lineage>
</organism>